<evidence type="ECO:0000255" key="1">
    <source>
        <dbReference type="HAMAP-Rule" id="MF_00567"/>
    </source>
</evidence>
<proteinExistence type="inferred from homology"/>
<accession>Q5F6I7</accession>
<dbReference type="EC" id="2.5.1.72" evidence="1"/>
<dbReference type="EMBL" id="AE004969">
    <property type="protein sequence ID" value="AAW90200.1"/>
    <property type="molecule type" value="Genomic_DNA"/>
</dbReference>
<dbReference type="RefSeq" id="WP_003689487.1">
    <property type="nucleotide sequence ID" value="NC_002946.2"/>
</dbReference>
<dbReference type="RefSeq" id="YP_208612.1">
    <property type="nucleotide sequence ID" value="NC_002946.2"/>
</dbReference>
<dbReference type="SMR" id="Q5F6I7"/>
<dbReference type="STRING" id="242231.NGO_1567"/>
<dbReference type="KEGG" id="ngo:NGO_1567"/>
<dbReference type="PATRIC" id="fig|242231.10.peg.1868"/>
<dbReference type="HOGENOM" id="CLU_047382_1_0_4"/>
<dbReference type="UniPathway" id="UPA00253">
    <property type="reaction ID" value="UER00327"/>
</dbReference>
<dbReference type="Proteomes" id="UP000000535">
    <property type="component" value="Chromosome"/>
</dbReference>
<dbReference type="GO" id="GO:0005829">
    <property type="term" value="C:cytosol"/>
    <property type="evidence" value="ECO:0007669"/>
    <property type="project" value="TreeGrafter"/>
</dbReference>
<dbReference type="GO" id="GO:0051539">
    <property type="term" value="F:4 iron, 4 sulfur cluster binding"/>
    <property type="evidence" value="ECO:0007669"/>
    <property type="project" value="UniProtKB-KW"/>
</dbReference>
<dbReference type="GO" id="GO:0046872">
    <property type="term" value="F:metal ion binding"/>
    <property type="evidence" value="ECO:0007669"/>
    <property type="project" value="UniProtKB-KW"/>
</dbReference>
<dbReference type="GO" id="GO:0008987">
    <property type="term" value="F:quinolinate synthetase A activity"/>
    <property type="evidence" value="ECO:0007669"/>
    <property type="project" value="UniProtKB-UniRule"/>
</dbReference>
<dbReference type="GO" id="GO:0034628">
    <property type="term" value="P:'de novo' NAD biosynthetic process from L-aspartate"/>
    <property type="evidence" value="ECO:0007669"/>
    <property type="project" value="TreeGrafter"/>
</dbReference>
<dbReference type="FunFam" id="3.40.50.10800:FF:000001">
    <property type="entry name" value="Quinolinate synthase A"/>
    <property type="match status" value="1"/>
</dbReference>
<dbReference type="FunFam" id="3.40.50.10800:FF:000003">
    <property type="entry name" value="Quinolinate synthase A"/>
    <property type="match status" value="1"/>
</dbReference>
<dbReference type="Gene3D" id="3.40.50.10800">
    <property type="entry name" value="NadA-like"/>
    <property type="match status" value="3"/>
</dbReference>
<dbReference type="HAMAP" id="MF_00567">
    <property type="entry name" value="NadA_type1"/>
    <property type="match status" value="1"/>
</dbReference>
<dbReference type="InterPro" id="IPR003473">
    <property type="entry name" value="NadA"/>
</dbReference>
<dbReference type="InterPro" id="IPR036094">
    <property type="entry name" value="NadA_sf"/>
</dbReference>
<dbReference type="InterPro" id="IPR023513">
    <property type="entry name" value="Quinolinate_synth_A_type1"/>
</dbReference>
<dbReference type="NCBIfam" id="TIGR00550">
    <property type="entry name" value="nadA"/>
    <property type="match status" value="1"/>
</dbReference>
<dbReference type="NCBIfam" id="NF006877">
    <property type="entry name" value="PRK09375.1-1"/>
    <property type="match status" value="1"/>
</dbReference>
<dbReference type="NCBIfam" id="NF006878">
    <property type="entry name" value="PRK09375.1-2"/>
    <property type="match status" value="1"/>
</dbReference>
<dbReference type="PANTHER" id="PTHR30573:SF0">
    <property type="entry name" value="QUINOLINATE SYNTHASE, CHLOROPLASTIC"/>
    <property type="match status" value="1"/>
</dbReference>
<dbReference type="PANTHER" id="PTHR30573">
    <property type="entry name" value="QUINOLINATE SYNTHETASE A"/>
    <property type="match status" value="1"/>
</dbReference>
<dbReference type="Pfam" id="PF02445">
    <property type="entry name" value="NadA"/>
    <property type="match status" value="1"/>
</dbReference>
<dbReference type="SUPFAM" id="SSF142754">
    <property type="entry name" value="NadA-like"/>
    <property type="match status" value="1"/>
</dbReference>
<keyword id="KW-0004">4Fe-4S</keyword>
<keyword id="KW-0963">Cytoplasm</keyword>
<keyword id="KW-0408">Iron</keyword>
<keyword id="KW-0411">Iron-sulfur</keyword>
<keyword id="KW-0479">Metal-binding</keyword>
<keyword id="KW-0662">Pyridine nucleotide biosynthesis</keyword>
<keyword id="KW-1185">Reference proteome</keyword>
<keyword id="KW-0808">Transferase</keyword>
<sequence length="370" mass="40055">MQTAARRSFDYDMPLIQTPTSACQIRQAWAKVADTPDHETAGRLKDEIKVLLKRKNAVLVAHYYVDPLIQDLALETGGCVGDSLEMARFGAEHEAGTLVVAGVRFMGESAKILCPEKTVLMPDLEAECSLDLGCPEEAFSAFCDQHPDRTVAVYANTSAAVKARADWVVTSSVALEIVSYLKSRGEKLIWGPDRHLGDYIRRETGADMLLWQGSCIVHNEFKGQELAALKAEHPDAVVLVHPESPQSVIELGDVVGSTSKLLKAAVSRPEKKFIVATDLGILHEMQKQAPDKEFIAAPTAGNGGSCKSCAFCPWMAMNSLGGIKHALTGGRNEILLDRKLGEAAKLPLQRMLDFAAGLKRGDVFNGMGPA</sequence>
<protein>
    <recommendedName>
        <fullName evidence="1">Quinolinate synthase</fullName>
        <ecNumber evidence="1">2.5.1.72</ecNumber>
    </recommendedName>
</protein>
<comment type="function">
    <text evidence="1">Catalyzes the condensation of iminoaspartate with dihydroxyacetone phosphate to form quinolinate.</text>
</comment>
<comment type="catalytic activity">
    <reaction evidence="1">
        <text>iminosuccinate + dihydroxyacetone phosphate = quinolinate + phosphate + 2 H2O + H(+)</text>
        <dbReference type="Rhea" id="RHEA:25888"/>
        <dbReference type="ChEBI" id="CHEBI:15377"/>
        <dbReference type="ChEBI" id="CHEBI:15378"/>
        <dbReference type="ChEBI" id="CHEBI:29959"/>
        <dbReference type="ChEBI" id="CHEBI:43474"/>
        <dbReference type="ChEBI" id="CHEBI:57642"/>
        <dbReference type="ChEBI" id="CHEBI:77875"/>
        <dbReference type="EC" id="2.5.1.72"/>
    </reaction>
    <physiologicalReaction direction="left-to-right" evidence="1">
        <dbReference type="Rhea" id="RHEA:25889"/>
    </physiologicalReaction>
</comment>
<comment type="cofactor">
    <cofactor evidence="1">
        <name>[4Fe-4S] cluster</name>
        <dbReference type="ChEBI" id="CHEBI:49883"/>
    </cofactor>
    <text evidence="1">Binds 1 [4Fe-4S] cluster per subunit.</text>
</comment>
<comment type="pathway">
    <text evidence="1">Cofactor biosynthesis; NAD(+) biosynthesis; quinolinate from iminoaspartate: step 1/1.</text>
</comment>
<comment type="subcellular location">
    <subcellularLocation>
        <location evidence="1">Cytoplasm</location>
    </subcellularLocation>
</comment>
<comment type="similarity">
    <text evidence="1">Belongs to the quinolinate synthase family. Type 1 subfamily.</text>
</comment>
<feature type="chain" id="PRO_1000024958" description="Quinolinate synthase">
    <location>
        <begin position="1"/>
        <end position="370"/>
    </location>
</feature>
<feature type="binding site" evidence="1">
    <location>
        <position position="62"/>
    </location>
    <ligand>
        <name>iminosuccinate</name>
        <dbReference type="ChEBI" id="CHEBI:77875"/>
    </ligand>
</feature>
<feature type="binding site" evidence="1">
    <location>
        <position position="83"/>
    </location>
    <ligand>
        <name>iminosuccinate</name>
        <dbReference type="ChEBI" id="CHEBI:77875"/>
    </ligand>
</feature>
<feature type="binding site" evidence="1">
    <location>
        <position position="128"/>
    </location>
    <ligand>
        <name>[4Fe-4S] cluster</name>
        <dbReference type="ChEBI" id="CHEBI:49883"/>
    </ligand>
</feature>
<feature type="binding site" evidence="1">
    <location>
        <begin position="154"/>
        <end position="156"/>
    </location>
    <ligand>
        <name>iminosuccinate</name>
        <dbReference type="ChEBI" id="CHEBI:77875"/>
    </ligand>
</feature>
<feature type="binding site" evidence="1">
    <location>
        <position position="171"/>
    </location>
    <ligand>
        <name>iminosuccinate</name>
        <dbReference type="ChEBI" id="CHEBI:77875"/>
    </ligand>
</feature>
<feature type="binding site" evidence="1">
    <location>
        <position position="215"/>
    </location>
    <ligand>
        <name>[4Fe-4S] cluster</name>
        <dbReference type="ChEBI" id="CHEBI:49883"/>
    </ligand>
</feature>
<feature type="binding site" evidence="1">
    <location>
        <begin position="241"/>
        <end position="243"/>
    </location>
    <ligand>
        <name>iminosuccinate</name>
        <dbReference type="ChEBI" id="CHEBI:77875"/>
    </ligand>
</feature>
<feature type="binding site" evidence="1">
    <location>
        <position position="258"/>
    </location>
    <ligand>
        <name>iminosuccinate</name>
        <dbReference type="ChEBI" id="CHEBI:77875"/>
    </ligand>
</feature>
<feature type="binding site" evidence="1">
    <location>
        <position position="312"/>
    </location>
    <ligand>
        <name>[4Fe-4S] cluster</name>
        <dbReference type="ChEBI" id="CHEBI:49883"/>
    </ligand>
</feature>
<organism>
    <name type="scientific">Neisseria gonorrhoeae (strain ATCC 700825 / FA 1090)</name>
    <dbReference type="NCBI Taxonomy" id="242231"/>
    <lineage>
        <taxon>Bacteria</taxon>
        <taxon>Pseudomonadati</taxon>
        <taxon>Pseudomonadota</taxon>
        <taxon>Betaproteobacteria</taxon>
        <taxon>Neisseriales</taxon>
        <taxon>Neisseriaceae</taxon>
        <taxon>Neisseria</taxon>
    </lineage>
</organism>
<gene>
    <name evidence="1" type="primary">nadA</name>
    <name type="ordered locus">NGO_1567</name>
</gene>
<reference key="1">
    <citation type="submission" date="2003-03" db="EMBL/GenBank/DDBJ databases">
        <title>The complete genome sequence of Neisseria gonorrhoeae.</title>
        <authorList>
            <person name="Lewis L.A."/>
            <person name="Gillaspy A.F."/>
            <person name="McLaughlin R.E."/>
            <person name="Gipson M."/>
            <person name="Ducey T.F."/>
            <person name="Ownbey T."/>
            <person name="Hartman K."/>
            <person name="Nydick C."/>
            <person name="Carson M.B."/>
            <person name="Vaughn J."/>
            <person name="Thomson C."/>
            <person name="Song L."/>
            <person name="Lin S."/>
            <person name="Yuan X."/>
            <person name="Najar F."/>
            <person name="Zhan M."/>
            <person name="Ren Q."/>
            <person name="Zhu H."/>
            <person name="Qi S."/>
            <person name="Kenton S.M."/>
            <person name="Lai H."/>
            <person name="White J.D."/>
            <person name="Clifton S."/>
            <person name="Roe B.A."/>
            <person name="Dyer D.W."/>
        </authorList>
    </citation>
    <scope>NUCLEOTIDE SEQUENCE [LARGE SCALE GENOMIC DNA]</scope>
    <source>
        <strain>ATCC 700825 / FA 1090</strain>
    </source>
</reference>
<name>NADA_NEIG1</name>